<comment type="function">
    <text evidence="1">Small subunit of the glutamine-dependent carbamoyl phosphate synthetase (CPSase). CPSase catalyzes the formation of carbamoyl phosphate from the ammonia moiety of glutamine, carbonate, and phosphate donated by ATP, constituting the first step of 2 biosynthetic pathways, one leading to arginine and/or urea and the other to pyrimidine nucleotides. The small subunit (glutamine amidotransferase) binds and cleaves glutamine to supply the large subunit with the substrate ammonia.</text>
</comment>
<comment type="catalytic activity">
    <reaction evidence="1">
        <text>hydrogencarbonate + L-glutamine + 2 ATP + H2O = carbamoyl phosphate + L-glutamate + 2 ADP + phosphate + 2 H(+)</text>
        <dbReference type="Rhea" id="RHEA:18633"/>
        <dbReference type="ChEBI" id="CHEBI:15377"/>
        <dbReference type="ChEBI" id="CHEBI:15378"/>
        <dbReference type="ChEBI" id="CHEBI:17544"/>
        <dbReference type="ChEBI" id="CHEBI:29985"/>
        <dbReference type="ChEBI" id="CHEBI:30616"/>
        <dbReference type="ChEBI" id="CHEBI:43474"/>
        <dbReference type="ChEBI" id="CHEBI:58228"/>
        <dbReference type="ChEBI" id="CHEBI:58359"/>
        <dbReference type="ChEBI" id="CHEBI:456216"/>
        <dbReference type="EC" id="6.3.5.5"/>
    </reaction>
</comment>
<comment type="catalytic activity">
    <molecule>Carbamoyl phosphate synthase small chain</molecule>
    <reaction evidence="1">
        <text>L-glutamine + H2O = L-glutamate + NH4(+)</text>
        <dbReference type="Rhea" id="RHEA:15889"/>
        <dbReference type="ChEBI" id="CHEBI:15377"/>
        <dbReference type="ChEBI" id="CHEBI:28938"/>
        <dbReference type="ChEBI" id="CHEBI:29985"/>
        <dbReference type="ChEBI" id="CHEBI:58359"/>
    </reaction>
</comment>
<comment type="pathway">
    <text evidence="1">Amino-acid biosynthesis; L-arginine biosynthesis; carbamoyl phosphate from bicarbonate: step 1/1.</text>
</comment>
<comment type="pathway">
    <text evidence="1">Pyrimidine metabolism; UMP biosynthesis via de novo pathway; (S)-dihydroorotate from bicarbonate: step 1/3.</text>
</comment>
<comment type="subunit">
    <text evidence="1">Composed of two chains; the small (or glutamine) chain promotes the hydrolysis of glutamine to ammonia, which is used by the large (or ammonia) chain to synthesize carbamoyl phosphate. Tetramer of heterodimers (alpha,beta)4.</text>
</comment>
<comment type="similarity">
    <text evidence="1">Belongs to the CarA family.</text>
</comment>
<accession>Q732I2</accession>
<organism>
    <name type="scientific">Bacillus cereus (strain ATCC 10987 / NRS 248)</name>
    <dbReference type="NCBI Taxonomy" id="222523"/>
    <lineage>
        <taxon>Bacteria</taxon>
        <taxon>Bacillati</taxon>
        <taxon>Bacillota</taxon>
        <taxon>Bacilli</taxon>
        <taxon>Bacillales</taxon>
        <taxon>Bacillaceae</taxon>
        <taxon>Bacillus</taxon>
        <taxon>Bacillus cereus group</taxon>
    </lineage>
</organism>
<name>CARA_BACC1</name>
<sequence>MKRQLILEDGTVLIGTGFGGEIEKSGEVVFTTGMTGYQETLSDPSYCGQIVTFTYPLIGNYGINRDDFESIHPSVNGLIVNEICDHPSNFRNEISLNDYLKERNIPGLAGIDTRKLTRKIRQYGTLRGRLCNMDADVEYIVSQLKATVFTDHVKRVSTKDPYPSPGRGHRVVLVDFGMKHGILRELNKRDCDVIVVPYNTTAEEILRLSPDGIMLSNGPGDPKDVPEAIEMLKDIIGKVPLFGICLGHQLFALASGANTSKLKFGHRGLNHPVKNLATGKVAITSQNHGYAVEEESVENTELEITHVALNDGTVEGLRHKKFPAFTVQYHPEASAGPEDANDLFEDFLTMIENFKKEGEELCQNA</sequence>
<gene>
    <name evidence="1" type="primary">carA</name>
    <name type="ordered locus">BCE_3932</name>
</gene>
<reference key="1">
    <citation type="journal article" date="2004" name="Nucleic Acids Res.">
        <title>The genome sequence of Bacillus cereus ATCC 10987 reveals metabolic adaptations and a large plasmid related to Bacillus anthracis pXO1.</title>
        <authorList>
            <person name="Rasko D.A."/>
            <person name="Ravel J."/>
            <person name="Oekstad O.A."/>
            <person name="Helgason E."/>
            <person name="Cer R.Z."/>
            <person name="Jiang L."/>
            <person name="Shores K.A."/>
            <person name="Fouts D.E."/>
            <person name="Tourasse N.J."/>
            <person name="Angiuoli S.V."/>
            <person name="Kolonay J.F."/>
            <person name="Nelson W.C."/>
            <person name="Kolstoe A.-B."/>
            <person name="Fraser C.M."/>
            <person name="Read T.D."/>
        </authorList>
    </citation>
    <scope>NUCLEOTIDE SEQUENCE [LARGE SCALE GENOMIC DNA]</scope>
    <source>
        <strain>ATCC 10987 / NRS 248</strain>
    </source>
</reference>
<keyword id="KW-0028">Amino-acid biosynthesis</keyword>
<keyword id="KW-0055">Arginine biosynthesis</keyword>
<keyword id="KW-0067">ATP-binding</keyword>
<keyword id="KW-0315">Glutamine amidotransferase</keyword>
<keyword id="KW-0436">Ligase</keyword>
<keyword id="KW-0547">Nucleotide-binding</keyword>
<keyword id="KW-0665">Pyrimidine biosynthesis</keyword>
<feature type="chain" id="PRO_0000112247" description="Carbamoyl phosphate synthase small chain">
    <location>
        <begin position="1"/>
        <end position="365"/>
    </location>
</feature>
<feature type="domain" description="Glutamine amidotransferase type-1" evidence="1">
    <location>
        <begin position="170"/>
        <end position="357"/>
    </location>
</feature>
<feature type="region of interest" description="CPSase" evidence="1">
    <location>
        <begin position="1"/>
        <end position="169"/>
    </location>
</feature>
<feature type="region of interest" description="CPSase">
    <location>
        <begin position="1"/>
        <end position="166"/>
    </location>
</feature>
<feature type="active site" description="Nucleophile" evidence="1">
    <location>
        <position position="245"/>
    </location>
</feature>
<feature type="active site" evidence="1">
    <location>
        <position position="330"/>
    </location>
</feature>
<feature type="active site" evidence="1">
    <location>
        <position position="332"/>
    </location>
</feature>
<feature type="binding site" evidence="1">
    <location>
        <position position="45"/>
    </location>
    <ligand>
        <name>L-glutamine</name>
        <dbReference type="ChEBI" id="CHEBI:58359"/>
    </ligand>
</feature>
<feature type="binding site" evidence="1">
    <location>
        <position position="218"/>
    </location>
    <ligand>
        <name>L-glutamine</name>
        <dbReference type="ChEBI" id="CHEBI:58359"/>
    </ligand>
</feature>
<feature type="binding site" evidence="1">
    <location>
        <position position="220"/>
    </location>
    <ligand>
        <name>L-glutamine</name>
        <dbReference type="ChEBI" id="CHEBI:58359"/>
    </ligand>
</feature>
<feature type="binding site" evidence="1">
    <location>
        <position position="246"/>
    </location>
    <ligand>
        <name>L-glutamine</name>
        <dbReference type="ChEBI" id="CHEBI:58359"/>
    </ligand>
</feature>
<feature type="binding site" evidence="1">
    <location>
        <position position="249"/>
    </location>
    <ligand>
        <name>L-glutamine</name>
        <dbReference type="ChEBI" id="CHEBI:58359"/>
    </ligand>
</feature>
<feature type="binding site" evidence="1">
    <location>
        <position position="287"/>
    </location>
    <ligand>
        <name>L-glutamine</name>
        <dbReference type="ChEBI" id="CHEBI:58359"/>
    </ligand>
</feature>
<feature type="binding site" evidence="1">
    <location>
        <position position="289"/>
    </location>
    <ligand>
        <name>L-glutamine</name>
        <dbReference type="ChEBI" id="CHEBI:58359"/>
    </ligand>
</feature>
<feature type="binding site" evidence="1">
    <location>
        <position position="290"/>
    </location>
    <ligand>
        <name>L-glutamine</name>
        <dbReference type="ChEBI" id="CHEBI:58359"/>
    </ligand>
</feature>
<dbReference type="EC" id="6.3.5.5" evidence="1"/>
<dbReference type="EMBL" id="AE017194">
    <property type="protein sequence ID" value="AAS42835.1"/>
    <property type="molecule type" value="Genomic_DNA"/>
</dbReference>
<dbReference type="SMR" id="Q732I2"/>
<dbReference type="KEGG" id="bca:BCE_3932"/>
<dbReference type="HOGENOM" id="CLU_035901_2_1_9"/>
<dbReference type="UniPathway" id="UPA00068">
    <property type="reaction ID" value="UER00171"/>
</dbReference>
<dbReference type="UniPathway" id="UPA00070">
    <property type="reaction ID" value="UER00115"/>
</dbReference>
<dbReference type="Proteomes" id="UP000002527">
    <property type="component" value="Chromosome"/>
</dbReference>
<dbReference type="GO" id="GO:0005524">
    <property type="term" value="F:ATP binding"/>
    <property type="evidence" value="ECO:0007669"/>
    <property type="project" value="UniProtKB-UniRule"/>
</dbReference>
<dbReference type="GO" id="GO:0004088">
    <property type="term" value="F:carbamoyl-phosphate synthase (glutamine-hydrolyzing) activity"/>
    <property type="evidence" value="ECO:0007669"/>
    <property type="project" value="UniProtKB-UniRule"/>
</dbReference>
<dbReference type="GO" id="GO:0004359">
    <property type="term" value="F:glutaminase activity"/>
    <property type="evidence" value="ECO:0007669"/>
    <property type="project" value="RHEA"/>
</dbReference>
<dbReference type="GO" id="GO:0006207">
    <property type="term" value="P:'de novo' pyrimidine nucleobase biosynthetic process"/>
    <property type="evidence" value="ECO:0007669"/>
    <property type="project" value="InterPro"/>
</dbReference>
<dbReference type="GO" id="GO:0044205">
    <property type="term" value="P:'de novo' UMP biosynthetic process"/>
    <property type="evidence" value="ECO:0007669"/>
    <property type="project" value="UniProtKB-UniRule"/>
</dbReference>
<dbReference type="GO" id="GO:0006541">
    <property type="term" value="P:glutamine metabolic process"/>
    <property type="evidence" value="ECO:0007669"/>
    <property type="project" value="InterPro"/>
</dbReference>
<dbReference type="GO" id="GO:0006526">
    <property type="term" value="P:L-arginine biosynthetic process"/>
    <property type="evidence" value="ECO:0007669"/>
    <property type="project" value="UniProtKB-UniRule"/>
</dbReference>
<dbReference type="CDD" id="cd01744">
    <property type="entry name" value="GATase1_CPSase"/>
    <property type="match status" value="1"/>
</dbReference>
<dbReference type="FunFam" id="3.40.50.880:FF:000029">
    <property type="entry name" value="Carbamoyl-phosphate synthase small chain"/>
    <property type="match status" value="1"/>
</dbReference>
<dbReference type="FunFam" id="3.50.30.20:FF:000001">
    <property type="entry name" value="Carbamoyl-phosphate synthase small chain"/>
    <property type="match status" value="1"/>
</dbReference>
<dbReference type="Gene3D" id="3.40.50.880">
    <property type="match status" value="1"/>
</dbReference>
<dbReference type="Gene3D" id="3.50.30.20">
    <property type="entry name" value="Carbamoyl-phosphate synthase small subunit, N-terminal domain"/>
    <property type="match status" value="1"/>
</dbReference>
<dbReference type="HAMAP" id="MF_01209">
    <property type="entry name" value="CPSase_S_chain"/>
    <property type="match status" value="1"/>
</dbReference>
<dbReference type="InterPro" id="IPR050472">
    <property type="entry name" value="Anth_synth/Amidotransfase"/>
</dbReference>
<dbReference type="InterPro" id="IPR006274">
    <property type="entry name" value="CarbamoylP_synth_ssu"/>
</dbReference>
<dbReference type="InterPro" id="IPR002474">
    <property type="entry name" value="CarbamoylP_synth_ssu_N"/>
</dbReference>
<dbReference type="InterPro" id="IPR036480">
    <property type="entry name" value="CarbP_synth_ssu_N_sf"/>
</dbReference>
<dbReference type="InterPro" id="IPR029062">
    <property type="entry name" value="Class_I_gatase-like"/>
</dbReference>
<dbReference type="InterPro" id="IPR035686">
    <property type="entry name" value="CPSase_GATase1"/>
</dbReference>
<dbReference type="InterPro" id="IPR017926">
    <property type="entry name" value="GATASE"/>
</dbReference>
<dbReference type="NCBIfam" id="TIGR01368">
    <property type="entry name" value="CPSaseIIsmall"/>
    <property type="match status" value="1"/>
</dbReference>
<dbReference type="NCBIfam" id="NF009475">
    <property type="entry name" value="PRK12838.1"/>
    <property type="match status" value="1"/>
</dbReference>
<dbReference type="PANTHER" id="PTHR43418:SF7">
    <property type="entry name" value="CARBAMOYL-PHOSPHATE SYNTHASE SMALL CHAIN"/>
    <property type="match status" value="1"/>
</dbReference>
<dbReference type="PANTHER" id="PTHR43418">
    <property type="entry name" value="MULTIFUNCTIONAL TRYPTOPHAN BIOSYNTHESIS PROTEIN-RELATED"/>
    <property type="match status" value="1"/>
</dbReference>
<dbReference type="Pfam" id="PF00988">
    <property type="entry name" value="CPSase_sm_chain"/>
    <property type="match status" value="1"/>
</dbReference>
<dbReference type="Pfam" id="PF00117">
    <property type="entry name" value="GATase"/>
    <property type="match status" value="1"/>
</dbReference>
<dbReference type="PRINTS" id="PR00097">
    <property type="entry name" value="ANTSNTHASEII"/>
</dbReference>
<dbReference type="PRINTS" id="PR00099">
    <property type="entry name" value="CPSGATASE"/>
</dbReference>
<dbReference type="PRINTS" id="PR00096">
    <property type="entry name" value="GATASE"/>
</dbReference>
<dbReference type="SMART" id="SM01097">
    <property type="entry name" value="CPSase_sm_chain"/>
    <property type="match status" value="1"/>
</dbReference>
<dbReference type="SUPFAM" id="SSF52021">
    <property type="entry name" value="Carbamoyl phosphate synthetase, small subunit N-terminal domain"/>
    <property type="match status" value="1"/>
</dbReference>
<dbReference type="SUPFAM" id="SSF52317">
    <property type="entry name" value="Class I glutamine amidotransferase-like"/>
    <property type="match status" value="1"/>
</dbReference>
<dbReference type="PROSITE" id="PS51273">
    <property type="entry name" value="GATASE_TYPE_1"/>
    <property type="match status" value="1"/>
</dbReference>
<evidence type="ECO:0000255" key="1">
    <source>
        <dbReference type="HAMAP-Rule" id="MF_01209"/>
    </source>
</evidence>
<proteinExistence type="inferred from homology"/>
<protein>
    <recommendedName>
        <fullName evidence="1">Carbamoyl phosphate synthase small chain</fullName>
        <ecNumber evidence="1">6.3.5.5</ecNumber>
    </recommendedName>
    <alternativeName>
        <fullName evidence="1">Carbamoyl phosphate synthetase glutamine chain</fullName>
    </alternativeName>
</protein>